<dbReference type="EC" id="2.3.2.23"/>
<dbReference type="EMBL" id="AB012248">
    <property type="protein sequence ID" value="BAB09462.1"/>
    <property type="molecule type" value="Genomic_DNA"/>
</dbReference>
<dbReference type="EMBL" id="CP002688">
    <property type="protein sequence ID" value="AED95943.1"/>
    <property type="molecule type" value="Genomic_DNA"/>
</dbReference>
<dbReference type="EMBL" id="CP002688">
    <property type="protein sequence ID" value="AED95944.1"/>
    <property type="molecule type" value="Genomic_DNA"/>
</dbReference>
<dbReference type="EMBL" id="CP002688">
    <property type="protein sequence ID" value="AED95945.1"/>
    <property type="molecule type" value="Genomic_DNA"/>
</dbReference>
<dbReference type="EMBL" id="AF380654">
    <property type="protein sequence ID" value="AAK55735.1"/>
    <property type="molecule type" value="mRNA"/>
</dbReference>
<dbReference type="EMBL" id="AY142040">
    <property type="protein sequence ID" value="AAM98304.1"/>
    <property type="molecule type" value="mRNA"/>
</dbReference>
<dbReference type="EMBL" id="DQ027046">
    <property type="protein sequence ID" value="AAY44872.1"/>
    <property type="molecule type" value="mRNA"/>
</dbReference>
<dbReference type="RefSeq" id="NP_001032048.2">
    <molecule id="Q9FK29-1"/>
    <property type="nucleotide sequence ID" value="NM_001036971.2"/>
</dbReference>
<dbReference type="RefSeq" id="NP_001032049.1">
    <molecule id="Q9FK29-2"/>
    <property type="nucleotide sequence ID" value="NM_001036972.2"/>
</dbReference>
<dbReference type="RefSeq" id="NP_199854.1">
    <molecule id="Q9FK29-1"/>
    <property type="nucleotide sequence ID" value="NM_124425.4"/>
</dbReference>
<dbReference type="SMR" id="Q9FK29"/>
<dbReference type="FunCoup" id="Q9FK29">
    <property type="interactions" value="4547"/>
</dbReference>
<dbReference type="STRING" id="3702.Q9FK29"/>
<dbReference type="TCDB" id="3.A.16.1.5">
    <property type="family name" value="the endoplasmic reticular retrotranslocon (er-rt) family"/>
</dbReference>
<dbReference type="PaxDb" id="3702-AT5G50430.1"/>
<dbReference type="ProteomicsDB" id="228656">
    <molecule id="Q9FK29-1"/>
</dbReference>
<dbReference type="EnsemblPlants" id="AT5G50430.1">
    <molecule id="Q9FK29-1"/>
    <property type="protein sequence ID" value="AT5G50430.1"/>
    <property type="gene ID" value="AT5G50430"/>
</dbReference>
<dbReference type="EnsemblPlants" id="AT5G50430.2">
    <molecule id="Q9FK29-1"/>
    <property type="protein sequence ID" value="AT5G50430.2"/>
    <property type="gene ID" value="AT5G50430"/>
</dbReference>
<dbReference type="EnsemblPlants" id="AT5G50430.3">
    <molecule id="Q9FK29-2"/>
    <property type="protein sequence ID" value="AT5G50430.3"/>
    <property type="gene ID" value="AT5G50430"/>
</dbReference>
<dbReference type="GeneID" id="835111"/>
<dbReference type="Gramene" id="AT5G50430.1">
    <molecule id="Q9FK29-1"/>
    <property type="protein sequence ID" value="AT5G50430.1"/>
    <property type="gene ID" value="AT5G50430"/>
</dbReference>
<dbReference type="Gramene" id="AT5G50430.2">
    <molecule id="Q9FK29-1"/>
    <property type="protein sequence ID" value="AT5G50430.2"/>
    <property type="gene ID" value="AT5G50430"/>
</dbReference>
<dbReference type="Gramene" id="AT5G50430.3">
    <molecule id="Q9FK29-2"/>
    <property type="protein sequence ID" value="AT5G50430.3"/>
    <property type="gene ID" value="AT5G50430"/>
</dbReference>
<dbReference type="KEGG" id="ath:AT5G50430"/>
<dbReference type="Araport" id="AT5G50430"/>
<dbReference type="TAIR" id="AT5G50430">
    <property type="gene designation" value="UBC33"/>
</dbReference>
<dbReference type="eggNOG" id="KOG0894">
    <property type="taxonomic scope" value="Eukaryota"/>
</dbReference>
<dbReference type="HOGENOM" id="CLU_041481_1_0_1"/>
<dbReference type="InParanoid" id="Q9FK29"/>
<dbReference type="OMA" id="ICISISD"/>
<dbReference type="PhylomeDB" id="Q9FK29"/>
<dbReference type="UniPathway" id="UPA00143"/>
<dbReference type="PRO" id="PR:Q9FK29"/>
<dbReference type="Proteomes" id="UP000006548">
    <property type="component" value="Chromosome 5"/>
</dbReference>
<dbReference type="ExpressionAtlas" id="Q9FK29">
    <property type="expression patterns" value="baseline and differential"/>
</dbReference>
<dbReference type="GO" id="GO:0016020">
    <property type="term" value="C:membrane"/>
    <property type="evidence" value="ECO:0007669"/>
    <property type="project" value="UniProtKB-SubCell"/>
</dbReference>
<dbReference type="GO" id="GO:0005524">
    <property type="term" value="F:ATP binding"/>
    <property type="evidence" value="ECO:0007669"/>
    <property type="project" value="UniProtKB-KW"/>
</dbReference>
<dbReference type="GO" id="GO:0061631">
    <property type="term" value="F:ubiquitin conjugating enzyme activity"/>
    <property type="evidence" value="ECO:0007669"/>
    <property type="project" value="UniProtKB-EC"/>
</dbReference>
<dbReference type="GO" id="GO:0042631">
    <property type="term" value="P:cellular response to water deprivation"/>
    <property type="evidence" value="ECO:0000316"/>
    <property type="project" value="TAIR"/>
</dbReference>
<dbReference type="GO" id="GO:1902457">
    <property type="term" value="P:negative regulation of stomatal opening"/>
    <property type="evidence" value="ECO:0000316"/>
    <property type="project" value="TAIR"/>
</dbReference>
<dbReference type="GO" id="GO:0016567">
    <property type="term" value="P:protein ubiquitination"/>
    <property type="evidence" value="ECO:0007669"/>
    <property type="project" value="UniProtKB-UniPathway"/>
</dbReference>
<dbReference type="CDD" id="cd23799">
    <property type="entry name" value="UBCc_UBE2J"/>
    <property type="match status" value="1"/>
</dbReference>
<dbReference type="FunFam" id="3.10.110.10:FF:000059">
    <property type="entry name" value="Ubiquitin-conjugating enzyme E2 34"/>
    <property type="match status" value="1"/>
</dbReference>
<dbReference type="Gene3D" id="3.10.110.10">
    <property type="entry name" value="Ubiquitin Conjugating Enzyme"/>
    <property type="match status" value="1"/>
</dbReference>
<dbReference type="InterPro" id="IPR050113">
    <property type="entry name" value="Ub_conjugating_enzyme"/>
</dbReference>
<dbReference type="InterPro" id="IPR000608">
    <property type="entry name" value="UBQ-conjugat_E2_core"/>
</dbReference>
<dbReference type="InterPro" id="IPR016135">
    <property type="entry name" value="UBQ-conjugating_enzyme/RWD"/>
</dbReference>
<dbReference type="PANTHER" id="PTHR24067">
    <property type="entry name" value="UBIQUITIN-CONJUGATING ENZYME E2"/>
    <property type="match status" value="1"/>
</dbReference>
<dbReference type="Pfam" id="PF00179">
    <property type="entry name" value="UQ_con"/>
    <property type="match status" value="1"/>
</dbReference>
<dbReference type="SMART" id="SM00212">
    <property type="entry name" value="UBCc"/>
    <property type="match status" value="1"/>
</dbReference>
<dbReference type="SUPFAM" id="SSF54495">
    <property type="entry name" value="UBC-like"/>
    <property type="match status" value="1"/>
</dbReference>
<dbReference type="PROSITE" id="PS50127">
    <property type="entry name" value="UBC_2"/>
    <property type="match status" value="1"/>
</dbReference>
<keyword id="KW-0025">Alternative splicing</keyword>
<keyword id="KW-0067">ATP-binding</keyword>
<keyword id="KW-0472">Membrane</keyword>
<keyword id="KW-0547">Nucleotide-binding</keyword>
<keyword id="KW-1185">Reference proteome</keyword>
<keyword id="KW-0808">Transferase</keyword>
<keyword id="KW-0812">Transmembrane</keyword>
<keyword id="KW-1133">Transmembrane helix</keyword>
<keyword id="KW-0833">Ubl conjugation pathway</keyword>
<organism>
    <name type="scientific">Arabidopsis thaliana</name>
    <name type="common">Mouse-ear cress</name>
    <dbReference type="NCBI Taxonomy" id="3702"/>
    <lineage>
        <taxon>Eukaryota</taxon>
        <taxon>Viridiplantae</taxon>
        <taxon>Streptophyta</taxon>
        <taxon>Embryophyta</taxon>
        <taxon>Tracheophyta</taxon>
        <taxon>Spermatophyta</taxon>
        <taxon>Magnoliopsida</taxon>
        <taxon>eudicotyledons</taxon>
        <taxon>Gunneridae</taxon>
        <taxon>Pentapetalae</taxon>
        <taxon>rosids</taxon>
        <taxon>malvids</taxon>
        <taxon>Brassicales</taxon>
        <taxon>Brassicaceae</taxon>
        <taxon>Camelineae</taxon>
        <taxon>Arabidopsis</taxon>
    </lineage>
</organism>
<proteinExistence type="evidence at transcript level"/>
<sequence length="243" mass="27357">MAEKACIKRLQKEYRALCKEPVSHVVARPSPNDILEWHYVLEGSEGTPFAGGFYYGKIKFPPEYPYKPPGITMTTPNGRFVTQKKICLSMSDFHPESWNPMWSVSSILTGLLSFMMDNSPTTGSVNTSVAEKQRLAKSSLAFNCKSVTFRKLFPEYVEKYSQQQVAEEEAATQQTTTSENQDFPQKDNAKVESEKSVGLKKESIQEVGLKERRRNKKEALPGWIVLLLVSIVGVVMALPLLQL</sequence>
<comment type="function">
    <text evidence="1">Accepts the ubiquitin from the E1 complex and catalyzes its covalent attachment to other proteins.</text>
</comment>
<comment type="catalytic activity">
    <reaction evidence="3">
        <text>S-ubiquitinyl-[E1 ubiquitin-activating enzyme]-L-cysteine + [E2 ubiquitin-conjugating enzyme]-L-cysteine = [E1 ubiquitin-activating enzyme]-L-cysteine + S-ubiquitinyl-[E2 ubiquitin-conjugating enzyme]-L-cysteine.</text>
        <dbReference type="EC" id="2.3.2.23"/>
    </reaction>
</comment>
<comment type="pathway">
    <text evidence="3">Protein modification; protein ubiquitination.</text>
</comment>
<comment type="subcellular location">
    <subcellularLocation>
        <location evidence="5">Membrane</location>
        <topology evidence="5">Single-pass membrane protein</topology>
    </subcellularLocation>
</comment>
<comment type="alternative products">
    <event type="alternative splicing"/>
    <isoform>
        <id>Q9FK29-1</id>
        <name>1</name>
        <sequence type="displayed"/>
    </isoform>
    <isoform>
        <id>Q9FK29-2</id>
        <name>2</name>
        <sequence type="described" ref="VSP_034928"/>
    </isoform>
</comment>
<comment type="similarity">
    <text evidence="3">Belongs to the ubiquitin-conjugating enzyme family.</text>
</comment>
<name>UBC33_ARATH</name>
<gene>
    <name type="primary">UBC33</name>
    <name type="ordered locus">At5g50430</name>
    <name type="ORF">MXI22.15</name>
</gene>
<protein>
    <recommendedName>
        <fullName>Probable ubiquitin-conjugating enzyme E2 33</fullName>
        <ecNumber>2.3.2.23</ecNumber>
    </recommendedName>
    <alternativeName>
        <fullName>E2 ubiquitin-conjugating enzyme 33</fullName>
    </alternativeName>
    <alternativeName>
        <fullName>Ubiquitin carrier protein 33</fullName>
    </alternativeName>
</protein>
<evidence type="ECO:0000250" key="1">
    <source>
        <dbReference type="UniProtKB" id="P42743"/>
    </source>
</evidence>
<evidence type="ECO:0000255" key="2"/>
<evidence type="ECO:0000255" key="3">
    <source>
        <dbReference type="PROSITE-ProRule" id="PRU00388"/>
    </source>
</evidence>
<evidence type="ECO:0000256" key="4">
    <source>
        <dbReference type="SAM" id="MobiDB-lite"/>
    </source>
</evidence>
<evidence type="ECO:0000305" key="5"/>
<reference key="1">
    <citation type="journal article" date="1998" name="DNA Res.">
        <title>Structural analysis of Arabidopsis thaliana chromosome 5. VI. Sequence features of the regions of 1,367,185 bp covered by 19 physically assigned P1 and TAC clones.</title>
        <authorList>
            <person name="Kotani H."/>
            <person name="Nakamura Y."/>
            <person name="Sato S."/>
            <person name="Asamizu E."/>
            <person name="Kaneko T."/>
            <person name="Miyajima N."/>
            <person name="Tabata S."/>
        </authorList>
    </citation>
    <scope>NUCLEOTIDE SEQUENCE [LARGE SCALE GENOMIC DNA]</scope>
    <source>
        <strain>cv. Columbia</strain>
    </source>
</reference>
<reference key="2">
    <citation type="journal article" date="2017" name="Plant J.">
        <title>Araport11: a complete reannotation of the Arabidopsis thaliana reference genome.</title>
        <authorList>
            <person name="Cheng C.Y."/>
            <person name="Krishnakumar V."/>
            <person name="Chan A.P."/>
            <person name="Thibaud-Nissen F."/>
            <person name="Schobel S."/>
            <person name="Town C.D."/>
        </authorList>
    </citation>
    <scope>GENOME REANNOTATION</scope>
    <source>
        <strain>cv. Columbia</strain>
    </source>
</reference>
<reference key="3">
    <citation type="journal article" date="2003" name="Science">
        <title>Empirical analysis of transcriptional activity in the Arabidopsis genome.</title>
        <authorList>
            <person name="Yamada K."/>
            <person name="Lim J."/>
            <person name="Dale J.M."/>
            <person name="Chen H."/>
            <person name="Shinn P."/>
            <person name="Palm C.J."/>
            <person name="Southwick A.M."/>
            <person name="Wu H.C."/>
            <person name="Kim C.J."/>
            <person name="Nguyen M."/>
            <person name="Pham P.K."/>
            <person name="Cheuk R.F."/>
            <person name="Karlin-Newmann G."/>
            <person name="Liu S.X."/>
            <person name="Lam B."/>
            <person name="Sakano H."/>
            <person name="Wu T."/>
            <person name="Yu G."/>
            <person name="Miranda M."/>
            <person name="Quach H.L."/>
            <person name="Tripp M."/>
            <person name="Chang C.H."/>
            <person name="Lee J.M."/>
            <person name="Toriumi M.J."/>
            <person name="Chan M.M."/>
            <person name="Tang C.C."/>
            <person name="Onodera C.S."/>
            <person name="Deng J.M."/>
            <person name="Akiyama K."/>
            <person name="Ansari Y."/>
            <person name="Arakawa T."/>
            <person name="Banh J."/>
            <person name="Banno F."/>
            <person name="Bowser L."/>
            <person name="Brooks S.Y."/>
            <person name="Carninci P."/>
            <person name="Chao Q."/>
            <person name="Choy N."/>
            <person name="Enju A."/>
            <person name="Goldsmith A.D."/>
            <person name="Gurjal M."/>
            <person name="Hansen N.F."/>
            <person name="Hayashizaki Y."/>
            <person name="Johnson-Hopson C."/>
            <person name="Hsuan V.W."/>
            <person name="Iida K."/>
            <person name="Karnes M."/>
            <person name="Khan S."/>
            <person name="Koesema E."/>
            <person name="Ishida J."/>
            <person name="Jiang P.X."/>
            <person name="Jones T."/>
            <person name="Kawai J."/>
            <person name="Kamiya A."/>
            <person name="Meyers C."/>
            <person name="Nakajima M."/>
            <person name="Narusaka M."/>
            <person name="Seki M."/>
            <person name="Sakurai T."/>
            <person name="Satou M."/>
            <person name="Tamse R."/>
            <person name="Vaysberg M."/>
            <person name="Wallender E.K."/>
            <person name="Wong C."/>
            <person name="Yamamura Y."/>
            <person name="Yuan S."/>
            <person name="Shinozaki K."/>
            <person name="Davis R.W."/>
            <person name="Theologis A."/>
            <person name="Ecker J.R."/>
        </authorList>
    </citation>
    <scope>NUCLEOTIDE SEQUENCE [LARGE SCALE MRNA] (ISOFORM 1)</scope>
    <source>
        <strain>cv. Columbia</strain>
    </source>
</reference>
<reference key="4">
    <citation type="journal article" date="2005" name="Plant Physiol.">
        <title>Genome analysis and functional characterization of the E2 and RING-type E3 ligase ubiquitination enzymes of Arabidopsis.</title>
        <authorList>
            <person name="Kraft E."/>
            <person name="Stone S.L."/>
            <person name="Ma L."/>
            <person name="Su N."/>
            <person name="Gao Y."/>
            <person name="Lau O.-S."/>
            <person name="Deng X.-W."/>
            <person name="Callis J."/>
        </authorList>
    </citation>
    <scope>NUCLEOTIDE SEQUENCE [MRNA] OF 1-219</scope>
    <scope>GENE FAMILY</scope>
    <scope>NOMENCLATURE</scope>
</reference>
<accession>Q9FK29</accession>
<accession>Q2V2Z8</accession>
<accession>Q4TYX8</accession>
<feature type="chain" id="PRO_0000345198" description="Probable ubiquitin-conjugating enzyme E2 33">
    <location>
        <begin position="1"/>
        <end position="243"/>
    </location>
</feature>
<feature type="transmembrane region" description="Helical" evidence="2">
    <location>
        <begin position="220"/>
        <end position="240"/>
    </location>
</feature>
<feature type="domain" description="UBC core" evidence="3">
    <location>
        <begin position="5"/>
        <end position="162"/>
    </location>
</feature>
<feature type="region of interest" description="Disordered" evidence="4">
    <location>
        <begin position="168"/>
        <end position="197"/>
    </location>
</feature>
<feature type="compositionally biased region" description="Basic and acidic residues" evidence="4">
    <location>
        <begin position="184"/>
        <end position="197"/>
    </location>
</feature>
<feature type="active site" description="Glycyl thioester intermediate" evidence="3">
    <location>
        <position position="87"/>
    </location>
</feature>
<feature type="splice variant" id="VSP_034928" description="In isoform 2." evidence="5">
    <original>HYVLEGSEGTPFAG</original>
    <variation>R</variation>
    <location>
        <begin position="38"/>
        <end position="51"/>
    </location>
</feature>